<protein>
    <recommendedName>
        <fullName evidence="3">Methyltransferase cfoD</fullName>
        <ecNumber evidence="2">2.1.1.-</ecNumber>
    </recommendedName>
    <alternativeName>
        <fullName evidence="3">Chlorflavonin biosynthesis cluster protein D</fullName>
    </alternativeName>
</protein>
<accession>A0A2I2F2J7</accession>
<feature type="chain" id="PRO_0000459549" description="Methyltransferase cfoD">
    <location>
        <begin position="1"/>
        <end position="406"/>
    </location>
</feature>
<feature type="active site" description="Proton acceptor" evidence="1">
    <location>
        <position position="315"/>
    </location>
</feature>
<feature type="binding site" evidence="1">
    <location>
        <position position="270"/>
    </location>
    <ligand>
        <name>S-adenosyl-L-methionine</name>
        <dbReference type="ChEBI" id="CHEBI:59789"/>
    </ligand>
</feature>
<feature type="binding site" evidence="1">
    <location>
        <position position="312"/>
    </location>
    <ligand>
        <name>S-adenosyl-L-methionine</name>
        <dbReference type="ChEBI" id="CHEBI:59789"/>
    </ligand>
</feature>
<name>CFOD_ASPCN</name>
<dbReference type="EC" id="2.1.1.-" evidence="2"/>
<dbReference type="EMBL" id="KZ559171">
    <property type="protein sequence ID" value="PLB34864.1"/>
    <property type="molecule type" value="Genomic_DNA"/>
</dbReference>
<dbReference type="SMR" id="A0A2I2F2J7"/>
<dbReference type="OrthoDB" id="1535081at2759"/>
<dbReference type="UniPathway" id="UPA00154"/>
<dbReference type="Proteomes" id="UP000234585">
    <property type="component" value="Unassembled WGS sequence"/>
</dbReference>
<dbReference type="GO" id="GO:0008171">
    <property type="term" value="F:O-methyltransferase activity"/>
    <property type="evidence" value="ECO:0007669"/>
    <property type="project" value="InterPro"/>
</dbReference>
<dbReference type="GO" id="GO:0009813">
    <property type="term" value="P:flavonoid biosynthetic process"/>
    <property type="evidence" value="ECO:0007669"/>
    <property type="project" value="UniProtKB-UniPathway"/>
</dbReference>
<dbReference type="GO" id="GO:0032259">
    <property type="term" value="P:methylation"/>
    <property type="evidence" value="ECO:0007669"/>
    <property type="project" value="UniProtKB-KW"/>
</dbReference>
<dbReference type="GO" id="GO:0044550">
    <property type="term" value="P:secondary metabolite biosynthetic process"/>
    <property type="evidence" value="ECO:0007669"/>
    <property type="project" value="UniProtKB-ARBA"/>
</dbReference>
<dbReference type="Gene3D" id="3.40.50.150">
    <property type="entry name" value="Vaccinia Virus protein VP39"/>
    <property type="match status" value="1"/>
</dbReference>
<dbReference type="Gene3D" id="1.10.10.10">
    <property type="entry name" value="Winged helix-like DNA-binding domain superfamily/Winged helix DNA-binding domain"/>
    <property type="match status" value="1"/>
</dbReference>
<dbReference type="InterPro" id="IPR016461">
    <property type="entry name" value="COMT-like"/>
</dbReference>
<dbReference type="InterPro" id="IPR001077">
    <property type="entry name" value="O_MeTrfase_dom"/>
</dbReference>
<dbReference type="InterPro" id="IPR029063">
    <property type="entry name" value="SAM-dependent_MTases_sf"/>
</dbReference>
<dbReference type="InterPro" id="IPR036388">
    <property type="entry name" value="WH-like_DNA-bd_sf"/>
</dbReference>
<dbReference type="InterPro" id="IPR036390">
    <property type="entry name" value="WH_DNA-bd_sf"/>
</dbReference>
<dbReference type="PANTHER" id="PTHR43712:SF16">
    <property type="entry name" value="O-METHYLTRANSFERASE ELCB"/>
    <property type="match status" value="1"/>
</dbReference>
<dbReference type="PANTHER" id="PTHR43712">
    <property type="entry name" value="PUTATIVE (AFU_ORTHOLOGUE AFUA_4G14580)-RELATED"/>
    <property type="match status" value="1"/>
</dbReference>
<dbReference type="Pfam" id="PF00891">
    <property type="entry name" value="Methyltransf_2"/>
    <property type="match status" value="1"/>
</dbReference>
<dbReference type="PIRSF" id="PIRSF005739">
    <property type="entry name" value="O-mtase"/>
    <property type="match status" value="1"/>
</dbReference>
<dbReference type="SUPFAM" id="SSF53335">
    <property type="entry name" value="S-adenosyl-L-methionine-dependent methyltransferases"/>
    <property type="match status" value="1"/>
</dbReference>
<dbReference type="SUPFAM" id="SSF46785">
    <property type="entry name" value="Winged helix' DNA-binding domain"/>
    <property type="match status" value="1"/>
</dbReference>
<dbReference type="PROSITE" id="PS51683">
    <property type="entry name" value="SAM_OMT_II"/>
    <property type="match status" value="1"/>
</dbReference>
<reference key="1">
    <citation type="submission" date="2017-12" db="EMBL/GenBank/DDBJ databases">
        <authorList>
            <consortium name="DOE Joint Genome Institute"/>
            <person name="Haridas S."/>
            <person name="Kjaerbolling I."/>
            <person name="Vesth T.C."/>
            <person name="Frisvad J.C."/>
            <person name="Nybo J.L."/>
            <person name="Theobald S."/>
            <person name="Kuo A."/>
            <person name="Bowyer P."/>
            <person name="Matsuda Y."/>
            <person name="Mondo S."/>
            <person name="Lyhne E.K."/>
            <person name="Kogle M.E."/>
            <person name="Clum A."/>
            <person name="Lipzen A."/>
            <person name="Salamov A."/>
            <person name="Ngan C.Y."/>
            <person name="Daum C."/>
            <person name="Chiniquy J."/>
            <person name="Barry K."/>
            <person name="LaButti K."/>
            <person name="Simmons B.A."/>
            <person name="Magnuson J.K."/>
            <person name="Mortensen U.H."/>
            <person name="Larsen T.O."/>
            <person name="Grigoriev I.V."/>
            <person name="Baker S.E."/>
            <person name="Andersen M.R."/>
            <person name="Nordberg H.P."/>
            <person name="Cantor M.N."/>
            <person name="Hua S.X."/>
        </authorList>
    </citation>
    <scope>NUCLEOTIDE SEQUENCE [LARGE SCALE GENOMIC DNA]</scope>
    <source>
        <strain>CBS 102.13</strain>
    </source>
</reference>
<reference key="2">
    <citation type="journal article" date="2023" name="Angew. Chem. Int. Ed.">
        <title>Discovery of a Unique Flavonoid Biosynthesis Mechanism in Fungi by Genome Mining.</title>
        <authorList>
            <person name="Zhang W."/>
            <person name="Zhang X."/>
            <person name="Feng D."/>
            <person name="Liang Y."/>
            <person name="Wu Z."/>
            <person name="Du S."/>
            <person name="Zhou Y."/>
            <person name="Geng C."/>
            <person name="Men P."/>
            <person name="Fu C."/>
            <person name="Huang X."/>
            <person name="Lu X."/>
        </authorList>
    </citation>
    <scope>FUNCTION</scope>
    <scope>DISRUPTION PHENOTYPE</scope>
    <scope>PATHWAY</scope>
</reference>
<sequence length="406" mass="44690">MASKRLETLCKSLTREVGRISSQTGRDDYDARRKVADIARELINETTHPSDVAAQYTINMAEMACLRMFQKWKLLDKIPASGSISYEDLSASINADKNLIARMGQMLVATGKLRQTSPSHVAHTRLSTAFAHRSPPAVWFSMSFDETLVPWTQWPRYFAKYGPRQPSGQTAVPMTFAEGADGELTCYEVIARGGPERMADFADGMQGIPELMPAAGIYDFAWVGEAVAEGEVDSDMPLIVDVGGNLGQALLEIIAHTESSIPPDRCVLQDRADVIAAADALDNPVLKKVRKMPVDYHQGQPLKGALIYYVRRCLHGFTDEVSIKLLKHLTAALPADPRARVLICEQITTTPPDPYTTMMDICMMNVGSKERSEDDFTNLVTAAGMKVIKFHRGEGVATHVIECARA</sequence>
<comment type="function">
    <text evidence="2">Methyltransferase; part of the gene cluster that mediates the biosynthesis of chlorflavonin, a fungal flavonoid with acetolactate synthase inhibitory activity (PubMed:36704842). Within the pathway, cfoD is responsible for the methylation at position C3-OH of flavonoid (PubMed:36704842). The pathway begins with the PKS-NRPS hybrid synthetase cfoA that uses benzoic acid or p-hydroxybenzoic acid as a starter unit with four rounds of chain elongation using malonyl-CoA to form the chalcone skeleton. Then, a new type of chalcone isomerase, cfoK, catalyzes the conversion of the chalcone into a flavanone by a histidine-mediated oxa-Michael addition mechanism. The desaturation of flavanone to flavone is catalyzed by a new type of flavone synthase, the flavin mononucleotide (FMN)-dependent oxidoreductase cfoJ. Monooxygenases cfoF, cfoG, and P450 cfoH are responsible for the hydroxylation of the flavonoid skeleton at sites C3, C8, and C2', respectively. Like cfoF, the dehydratase cfoI also plays a role in the hydroxylation of position C3. Methyltransferases cfoB, cfoC, and cfoD then catalyze the methylation of C7-OH, C8-OH, and C3-OH, respectively. Finally, the monooxygenase cfoE is responsible for the chlorination of flavonoid at position C3' (PubMed:36704842).</text>
</comment>
<comment type="pathway">
    <text evidence="2">Secondary metabolite biosynthesis; flavonoid biosynthesis.</text>
</comment>
<comment type="disruption phenotype">
    <text evidence="2">Impairs methylation of the flavonoid skeleton at position C3-OH.</text>
</comment>
<comment type="similarity">
    <text evidence="4">Belongs to the class I-like SAM-binding methyltransferase superfamily. Cation-independent O-methyltransferase family.</text>
</comment>
<keyword id="KW-0284">Flavonoid biosynthesis</keyword>
<keyword id="KW-0489">Methyltransferase</keyword>
<keyword id="KW-1185">Reference proteome</keyword>
<keyword id="KW-0949">S-adenosyl-L-methionine</keyword>
<keyword id="KW-0808">Transferase</keyword>
<evidence type="ECO:0000255" key="1">
    <source>
        <dbReference type="PROSITE-ProRule" id="PRU01020"/>
    </source>
</evidence>
<evidence type="ECO:0000269" key="2">
    <source>
    </source>
</evidence>
<evidence type="ECO:0000303" key="3">
    <source>
    </source>
</evidence>
<evidence type="ECO:0000305" key="4"/>
<gene>
    <name evidence="3" type="primary">cfoD</name>
    <name type="ORF">BDW47DRAFT_70822</name>
</gene>
<organism>
    <name type="scientific">Aspergillus candidus</name>
    <dbReference type="NCBI Taxonomy" id="41067"/>
    <lineage>
        <taxon>Eukaryota</taxon>
        <taxon>Fungi</taxon>
        <taxon>Dikarya</taxon>
        <taxon>Ascomycota</taxon>
        <taxon>Pezizomycotina</taxon>
        <taxon>Eurotiomycetes</taxon>
        <taxon>Eurotiomycetidae</taxon>
        <taxon>Eurotiales</taxon>
        <taxon>Aspergillaceae</taxon>
        <taxon>Aspergillus</taxon>
        <taxon>Aspergillus subgen. Circumdati</taxon>
    </lineage>
</organism>
<proteinExistence type="inferred from homology"/>